<gene>
    <name type="primary">ftsK</name>
    <name type="ordered locus">SF0849</name>
    <name type="ordered locus">S0890</name>
</gene>
<protein>
    <recommendedName>
        <fullName>DNA translocase FtsK</fullName>
    </recommendedName>
</protein>
<name>FTSK_SHIFL</name>
<feature type="chain" id="PRO_0000098291" description="DNA translocase FtsK">
    <location>
        <begin position="1"/>
        <end position="1342"/>
    </location>
</feature>
<feature type="topological domain" description="Cytoplasmic" evidence="2">
    <location>
        <begin position="1"/>
        <end position="24"/>
    </location>
</feature>
<feature type="transmembrane region" description="Helical" evidence="2">
    <location>
        <begin position="25"/>
        <end position="44"/>
    </location>
</feature>
<feature type="topological domain" description="Periplasmic" evidence="2">
    <location>
        <begin position="45"/>
        <end position="74"/>
    </location>
</feature>
<feature type="transmembrane region" description="Helical" evidence="2">
    <location>
        <begin position="75"/>
        <end position="98"/>
    </location>
</feature>
<feature type="topological domain" description="Cytoplasmic" evidence="2">
    <location>
        <begin position="99"/>
        <end position="115"/>
    </location>
</feature>
<feature type="transmembrane region" description="Helical" evidence="2">
    <location>
        <begin position="116"/>
        <end position="132"/>
    </location>
</feature>
<feature type="topological domain" description="Periplasmic" evidence="2">
    <location>
        <begin position="133"/>
        <end position="162"/>
    </location>
</feature>
<feature type="transmembrane region" description="Helical" evidence="2">
    <location>
        <begin position="163"/>
        <end position="179"/>
    </location>
</feature>
<feature type="topological domain" description="Cytoplasmic" evidence="2">
    <location>
        <begin position="180"/>
        <end position="1342"/>
    </location>
</feature>
<feature type="domain" description="FtsK" evidence="3">
    <location>
        <begin position="987"/>
        <end position="1200"/>
    </location>
</feature>
<feature type="region of interest" description="Disordered" evidence="4">
    <location>
        <begin position="346"/>
        <end position="386"/>
    </location>
</feature>
<feature type="region of interest" description="Disordered" evidence="4">
    <location>
        <begin position="409"/>
        <end position="489"/>
    </location>
</feature>
<feature type="region of interest" description="Disordered" evidence="4">
    <location>
        <begin position="604"/>
        <end position="639"/>
    </location>
</feature>
<feature type="region of interest" description="Disordered" evidence="4">
    <location>
        <begin position="688"/>
        <end position="712"/>
    </location>
</feature>
<feature type="region of interest" description="Disordered" evidence="4">
    <location>
        <begin position="741"/>
        <end position="862"/>
    </location>
</feature>
<feature type="compositionally biased region" description="Low complexity" evidence="4">
    <location>
        <begin position="409"/>
        <end position="430"/>
    </location>
</feature>
<feature type="compositionally biased region" description="Polar residues" evidence="4">
    <location>
        <begin position="437"/>
        <end position="448"/>
    </location>
</feature>
<feature type="compositionally biased region" description="Low complexity" evidence="4">
    <location>
        <begin position="449"/>
        <end position="480"/>
    </location>
</feature>
<feature type="compositionally biased region" description="Basic and acidic residues" evidence="4">
    <location>
        <begin position="619"/>
        <end position="628"/>
    </location>
</feature>
<feature type="compositionally biased region" description="Polar residues" evidence="4">
    <location>
        <begin position="690"/>
        <end position="699"/>
    </location>
</feature>
<feature type="compositionally biased region" description="Low complexity" evidence="4">
    <location>
        <begin position="741"/>
        <end position="829"/>
    </location>
</feature>
<feature type="compositionally biased region" description="Low complexity" evidence="4">
    <location>
        <begin position="849"/>
        <end position="859"/>
    </location>
</feature>
<feature type="binding site" evidence="3">
    <location>
        <begin position="1007"/>
        <end position="1012"/>
    </location>
    <ligand>
        <name>ATP</name>
        <dbReference type="ChEBI" id="CHEBI:30616"/>
    </ligand>
</feature>
<feature type="sequence conflict" description="In Ref. 2; AAP16354." evidence="5" ref="2">
    <original>Q</original>
    <variation>L</variation>
    <location>
        <position position="446"/>
    </location>
</feature>
<dbReference type="EMBL" id="AE005674">
    <property type="protein sequence ID" value="AAN42482.1"/>
    <property type="molecule type" value="Genomic_DNA"/>
</dbReference>
<dbReference type="EMBL" id="AE014073">
    <property type="protein sequence ID" value="AAP16354.1"/>
    <property type="molecule type" value="Genomic_DNA"/>
</dbReference>
<dbReference type="RefSeq" id="NP_706775.1">
    <property type="nucleotide sequence ID" value="NC_004337.2"/>
</dbReference>
<dbReference type="RefSeq" id="WP_000077083.1">
    <property type="nucleotide sequence ID" value="NZ_WPGW01000037.1"/>
</dbReference>
<dbReference type="SMR" id="Q83S00"/>
<dbReference type="STRING" id="198214.SF0849"/>
<dbReference type="PaxDb" id="198214-SF0849"/>
<dbReference type="GeneID" id="1023821"/>
<dbReference type="KEGG" id="sfl:SF0849"/>
<dbReference type="KEGG" id="sfx:S0890"/>
<dbReference type="PATRIC" id="fig|198214.7.peg.979"/>
<dbReference type="HOGENOM" id="CLU_001981_0_1_6"/>
<dbReference type="Proteomes" id="UP000001006">
    <property type="component" value="Chromosome"/>
</dbReference>
<dbReference type="Proteomes" id="UP000002673">
    <property type="component" value="Chromosome"/>
</dbReference>
<dbReference type="GO" id="GO:0005886">
    <property type="term" value="C:plasma membrane"/>
    <property type="evidence" value="ECO:0007669"/>
    <property type="project" value="UniProtKB-SubCell"/>
</dbReference>
<dbReference type="GO" id="GO:0005524">
    <property type="term" value="F:ATP binding"/>
    <property type="evidence" value="ECO:0007669"/>
    <property type="project" value="UniProtKB-KW"/>
</dbReference>
<dbReference type="GO" id="GO:0003677">
    <property type="term" value="F:DNA binding"/>
    <property type="evidence" value="ECO:0007669"/>
    <property type="project" value="UniProtKB-KW"/>
</dbReference>
<dbReference type="GO" id="GO:0051301">
    <property type="term" value="P:cell division"/>
    <property type="evidence" value="ECO:0007669"/>
    <property type="project" value="UniProtKB-KW"/>
</dbReference>
<dbReference type="GO" id="GO:0007059">
    <property type="term" value="P:chromosome segregation"/>
    <property type="evidence" value="ECO:0007669"/>
    <property type="project" value="UniProtKB-KW"/>
</dbReference>
<dbReference type="CDD" id="cd01127">
    <property type="entry name" value="TrwB_TraG_TraD_VirD4"/>
    <property type="match status" value="1"/>
</dbReference>
<dbReference type="FunFam" id="3.40.50.300:FF:000209">
    <property type="entry name" value="Cell division protein FtsK"/>
    <property type="match status" value="1"/>
</dbReference>
<dbReference type="FunFam" id="1.10.10.10:FF:000268">
    <property type="entry name" value="DNA translocase FtsK"/>
    <property type="match status" value="1"/>
</dbReference>
<dbReference type="FunFam" id="3.30.980.40:FF:000001">
    <property type="entry name" value="DNA translocase FtsK"/>
    <property type="match status" value="1"/>
</dbReference>
<dbReference type="Gene3D" id="3.30.980.40">
    <property type="match status" value="1"/>
</dbReference>
<dbReference type="Gene3D" id="3.40.50.300">
    <property type="entry name" value="P-loop containing nucleotide triphosphate hydrolases"/>
    <property type="match status" value="1"/>
</dbReference>
<dbReference type="Gene3D" id="1.10.10.10">
    <property type="entry name" value="Winged helix-like DNA-binding domain superfamily/Winged helix DNA-binding domain"/>
    <property type="match status" value="1"/>
</dbReference>
<dbReference type="InterPro" id="IPR050206">
    <property type="entry name" value="FtsK/SpoIIIE/SftA"/>
</dbReference>
<dbReference type="InterPro" id="IPR025199">
    <property type="entry name" value="FtsK_4TM"/>
</dbReference>
<dbReference type="InterPro" id="IPR041027">
    <property type="entry name" value="FtsK_alpha"/>
</dbReference>
<dbReference type="InterPro" id="IPR002543">
    <property type="entry name" value="FtsK_dom"/>
</dbReference>
<dbReference type="InterPro" id="IPR018541">
    <property type="entry name" value="Ftsk_gamma"/>
</dbReference>
<dbReference type="InterPro" id="IPR027417">
    <property type="entry name" value="P-loop_NTPase"/>
</dbReference>
<dbReference type="InterPro" id="IPR036388">
    <property type="entry name" value="WH-like_DNA-bd_sf"/>
</dbReference>
<dbReference type="InterPro" id="IPR036390">
    <property type="entry name" value="WH_DNA-bd_sf"/>
</dbReference>
<dbReference type="NCBIfam" id="NF007615">
    <property type="entry name" value="PRK10263.1"/>
    <property type="match status" value="1"/>
</dbReference>
<dbReference type="PANTHER" id="PTHR22683:SF41">
    <property type="entry name" value="DNA TRANSLOCASE FTSK"/>
    <property type="match status" value="1"/>
</dbReference>
<dbReference type="PANTHER" id="PTHR22683">
    <property type="entry name" value="SPORULATION PROTEIN RELATED"/>
    <property type="match status" value="1"/>
</dbReference>
<dbReference type="Pfam" id="PF13491">
    <property type="entry name" value="FtsK_4TM"/>
    <property type="match status" value="1"/>
</dbReference>
<dbReference type="Pfam" id="PF17854">
    <property type="entry name" value="FtsK_alpha"/>
    <property type="match status" value="1"/>
</dbReference>
<dbReference type="Pfam" id="PF09397">
    <property type="entry name" value="FtsK_gamma"/>
    <property type="match status" value="1"/>
</dbReference>
<dbReference type="Pfam" id="PF01580">
    <property type="entry name" value="FtsK_SpoIIIE"/>
    <property type="match status" value="1"/>
</dbReference>
<dbReference type="SMART" id="SM00843">
    <property type="entry name" value="Ftsk_gamma"/>
    <property type="match status" value="1"/>
</dbReference>
<dbReference type="SUPFAM" id="SSF52540">
    <property type="entry name" value="P-loop containing nucleoside triphosphate hydrolases"/>
    <property type="match status" value="1"/>
</dbReference>
<dbReference type="SUPFAM" id="SSF46785">
    <property type="entry name" value="Winged helix' DNA-binding domain"/>
    <property type="match status" value="1"/>
</dbReference>
<dbReference type="PROSITE" id="PS50901">
    <property type="entry name" value="FTSK"/>
    <property type="match status" value="1"/>
</dbReference>
<evidence type="ECO:0000250" key="1"/>
<evidence type="ECO:0000250" key="2">
    <source>
        <dbReference type="UniProtKB" id="P46889"/>
    </source>
</evidence>
<evidence type="ECO:0000255" key="3">
    <source>
        <dbReference type="PROSITE-ProRule" id="PRU00289"/>
    </source>
</evidence>
<evidence type="ECO:0000256" key="4">
    <source>
        <dbReference type="SAM" id="MobiDB-lite"/>
    </source>
</evidence>
<evidence type="ECO:0000305" key="5"/>
<keyword id="KW-0067">ATP-binding</keyword>
<keyword id="KW-0131">Cell cycle</keyword>
<keyword id="KW-0132">Cell division</keyword>
<keyword id="KW-0997">Cell inner membrane</keyword>
<keyword id="KW-1003">Cell membrane</keyword>
<keyword id="KW-0159">Chromosome partition</keyword>
<keyword id="KW-0238">DNA-binding</keyword>
<keyword id="KW-0472">Membrane</keyword>
<keyword id="KW-0547">Nucleotide-binding</keyword>
<keyword id="KW-1185">Reference proteome</keyword>
<keyword id="KW-0812">Transmembrane</keyword>
<keyword id="KW-1133">Transmembrane helix</keyword>
<reference key="1">
    <citation type="journal article" date="2002" name="Nucleic Acids Res.">
        <title>Genome sequence of Shigella flexneri 2a: insights into pathogenicity through comparison with genomes of Escherichia coli K12 and O157.</title>
        <authorList>
            <person name="Jin Q."/>
            <person name="Yuan Z."/>
            <person name="Xu J."/>
            <person name="Wang Y."/>
            <person name="Shen Y."/>
            <person name="Lu W."/>
            <person name="Wang J."/>
            <person name="Liu H."/>
            <person name="Yang J."/>
            <person name="Yang F."/>
            <person name="Zhang X."/>
            <person name="Zhang J."/>
            <person name="Yang G."/>
            <person name="Wu H."/>
            <person name="Qu D."/>
            <person name="Dong J."/>
            <person name="Sun L."/>
            <person name="Xue Y."/>
            <person name="Zhao A."/>
            <person name="Gao Y."/>
            <person name="Zhu J."/>
            <person name="Kan B."/>
            <person name="Ding K."/>
            <person name="Chen S."/>
            <person name="Cheng H."/>
            <person name="Yao Z."/>
            <person name="He B."/>
            <person name="Chen R."/>
            <person name="Ma D."/>
            <person name="Qiang B."/>
            <person name="Wen Y."/>
            <person name="Hou Y."/>
            <person name="Yu J."/>
        </authorList>
    </citation>
    <scope>NUCLEOTIDE SEQUENCE [LARGE SCALE GENOMIC DNA]</scope>
    <source>
        <strain>301 / Serotype 2a</strain>
    </source>
</reference>
<reference key="2">
    <citation type="journal article" date="2003" name="Infect. Immun.">
        <title>Complete genome sequence and comparative genomics of Shigella flexneri serotype 2a strain 2457T.</title>
        <authorList>
            <person name="Wei J."/>
            <person name="Goldberg M.B."/>
            <person name="Burland V."/>
            <person name="Venkatesan M.M."/>
            <person name="Deng W."/>
            <person name="Fournier G."/>
            <person name="Mayhew G.F."/>
            <person name="Plunkett G. III"/>
            <person name="Rose D.J."/>
            <person name="Darling A."/>
            <person name="Mau B."/>
            <person name="Perna N.T."/>
            <person name="Payne S.M."/>
            <person name="Runyen-Janecky L.J."/>
            <person name="Zhou S."/>
            <person name="Schwartz D.C."/>
            <person name="Blattner F.R."/>
        </authorList>
    </citation>
    <scope>NUCLEOTIDE SEQUENCE [LARGE SCALE GENOMIC DNA]</scope>
    <source>
        <strain>ATCC 700930 / 2457T / Serotype 2a</strain>
    </source>
</reference>
<organism>
    <name type="scientific">Shigella flexneri</name>
    <dbReference type="NCBI Taxonomy" id="623"/>
    <lineage>
        <taxon>Bacteria</taxon>
        <taxon>Pseudomonadati</taxon>
        <taxon>Pseudomonadota</taxon>
        <taxon>Gammaproteobacteria</taxon>
        <taxon>Enterobacterales</taxon>
        <taxon>Enterobacteriaceae</taxon>
        <taxon>Shigella</taxon>
    </lineage>
</organism>
<comment type="function">
    <text evidence="1">Essential cell division protein that coordinates cell division and chromosome segregation. The N-terminus is involved in assembly of the cell-division machinery. The C-terminus functions as a DNA motor that moves dsDNA in an ATP-dependent manner towards the dif recombination site, which is located within the replication terminus region. Translocation stops specifically at Xer-dif sites, where FtsK interacts with the Xer recombinase, allowing activation of chromosome unlinking by recombination. FtsK orienting polar sequences (KOPS) guide the direction of DNA translocation. FtsK can remove proteins from DNA as it translocates, but translocation stops specifically at XerCD-dif site, thereby preventing removal of XerC and XerD from dif (By similarity).</text>
</comment>
<comment type="subunit">
    <text evidence="1">Homohexamer. Forms a ring that surrounds DNA (By similarity).</text>
</comment>
<comment type="subcellular location">
    <subcellularLocation>
        <location evidence="1">Cell inner membrane</location>
        <topology evidence="1">Multi-pass membrane protein</topology>
    </subcellularLocation>
    <text evidence="1">Located at the septum.</text>
</comment>
<comment type="domain">
    <text evidence="1">Consists of an N-terminal domain, which is sufficient for the localization to the septal ring and is required for cell division, followed by a linker domain, and a C-terminal domain, which forms the translocation motor involved in chromosome segregation. The C-terminal domain can be further subdivided into alpha, beta and gamma subdomains. The alpha and beta subdomains multimerise to produce a hexameric ring, contain the nucleotide binding motif and form the DNA pump. The gamma subdomain is a regulatory subdomain that controls translocation of DNA by recognition of KOPS motifs and interacts with XerD recombinase (By similarity).</text>
</comment>
<comment type="similarity">
    <text evidence="5">Belongs to the FtsK/SpoIIIE/SftA family.</text>
</comment>
<proteinExistence type="inferred from homology"/>
<sequence length="1342" mass="148192">MSQEYTEDKEVTLTKLSSGRRLLEALLILIVLFAVWLMAALLSFNPSDPSWSQTAWHEPIHNLGGMPGAWLADTLFFIFGVMAYTIPVIIVGGCWFAWRHQSSDEYIDYFAVSLRIIGVLALILTSCGLAAINADDIWYFASGGVIGSLLSTTLQPLLHSSGGTIALLCVWAAGLTLFTGWSWVTIAEKLGGWILNILTFASNRTRRDDTWVDEDEYEDDEEYEDENHGKQHESRRARILRGALARRKRLAEKFINPMGRQTDAALFSGKRMDDDEEITYTARGVAADPDDVLFSGNRATQPEYDEYDPLLNSAPITEPVAVAAAATTATQSWAAPVEPVTQTPPVASVDVPPSQPTVAWQPVPGPQTGEPVIAPAPEGYPQQSQYAQPAVQYNEPLQQPVQPQQPYYAPAAEQPAQQPYYAPAPEQPVAGNAWQAEEQQSTFAPQSTYQTEQTYQQPAAQEPLYQQPQPVEQQPVVEPEPVVEETKPARPPLYYFEEVEEKRAREREQLAAWYQPIPEPVKEPEPIKSSLKAPSVAAVPPVEAAAAVSPLASGVKKATLATGAAATVAAPVFSLANSGGPRPQVKEGIGPQLPRPKRIRVPTRRELASYGIKLPSQRAAEEKAREAQRNQYDSGDQYNDDEIDAMQQDELARQFAQTQQQRYGEQYQHDVPVNAEDADAAAEAELARQFAQTQQQRYSGEQPAGANPFSLDDFEFSPMKALLDDGPHEPLFTPIVEPVQQPQQPVAPQQQYQQPQQPVAPQQQYQQPQQQVAPQPQYQQPQQPVAPQQQYQQPQQPVAPQPQYQQPQQPVAPQPQYQQPQQPVAPQPQDTLLHPLLMRNGDSRPLHKPTTPLPSLDLLTPPPSEVEPVDTFALEQMARLVEARLADFRIKADVVNYSPGPVITRFELNLAPGVKAARISNLSRDLARSLSTVAVRVVEVIPGKPYVGLELPNKKRQTVYLREVLDNAKFRDNPSPLTVVLGKDIAGEPVVADLAKMPHLLVAGTTGSGKSVGVNAMILSMLYKAQPEDVRFIMIDPKMLELSVYEGIPHLLTEVVTDMKDAANALRWCVNEMERRYKLMSALGVRNLAGYNEKIAEADRMMRPIPDPYWKPGDSMDAQHPVLKKEPYIVVLVDEFADLMMTVGKKVEELIARLAQKARAAGIHLVLATQRPSVDVITGLIKANIPTRIAFTVSSKIDSRTILDQAGAESLLGMGDMLYSGPNSTLPVRVHGAFVRDQEVHAVVQDWKARGRPQYVDGITSDSESEGGAGGFDGAEELDPLFDQAVQFVTEKRKASISGVQRQFRIGYNRAARIIEQMEAQGIVSEQGHNGNREVLAPPPFD</sequence>
<accession>Q83S00</accession>